<keyword id="KW-0067">ATP-binding</keyword>
<keyword id="KW-0963">Cytoplasm</keyword>
<keyword id="KW-0436">Ligase</keyword>
<keyword id="KW-0460">Magnesium</keyword>
<keyword id="KW-0479">Metal-binding</keyword>
<keyword id="KW-0547">Nucleotide-binding</keyword>
<keyword id="KW-0658">Purine biosynthesis</keyword>
<reference key="1">
    <citation type="journal article" date="2008" name="Genome Biol.">
        <title>Encapsulated in silica: genome, proteome and physiology of the thermophilic bacterium Anoxybacillus flavithermus WK1.</title>
        <authorList>
            <person name="Saw J.H."/>
            <person name="Mountain B.W."/>
            <person name="Feng L."/>
            <person name="Omelchenko M.V."/>
            <person name="Hou S."/>
            <person name="Saito J.A."/>
            <person name="Stott M.B."/>
            <person name="Li D."/>
            <person name="Zhao G."/>
            <person name="Wu J."/>
            <person name="Galperin M.Y."/>
            <person name="Koonin E.V."/>
            <person name="Makarova K.S."/>
            <person name="Wolf Y.I."/>
            <person name="Rigden D.J."/>
            <person name="Dunfield P.F."/>
            <person name="Wang L."/>
            <person name="Alam M."/>
        </authorList>
    </citation>
    <scope>NUCLEOTIDE SEQUENCE [LARGE SCALE GENOMIC DNA]</scope>
    <source>
        <strain>DSM 21510 / WK1</strain>
    </source>
</reference>
<dbReference type="EC" id="6.3.5.3" evidence="1"/>
<dbReference type="EMBL" id="CP000922">
    <property type="protein sequence ID" value="ACJ32618.1"/>
    <property type="molecule type" value="Genomic_DNA"/>
</dbReference>
<dbReference type="RefSeq" id="WP_012573957.1">
    <property type="nucleotide sequence ID" value="NC_011567.1"/>
</dbReference>
<dbReference type="SMR" id="B7GFT8"/>
<dbReference type="STRING" id="491915.Aflv_0234"/>
<dbReference type="GeneID" id="7036466"/>
<dbReference type="KEGG" id="afl:Aflv_0234"/>
<dbReference type="PATRIC" id="fig|491915.6.peg.240"/>
<dbReference type="eggNOG" id="COG0046">
    <property type="taxonomic scope" value="Bacteria"/>
</dbReference>
<dbReference type="HOGENOM" id="CLU_003100_0_1_9"/>
<dbReference type="UniPathway" id="UPA00074">
    <property type="reaction ID" value="UER00128"/>
</dbReference>
<dbReference type="Proteomes" id="UP000000742">
    <property type="component" value="Chromosome"/>
</dbReference>
<dbReference type="GO" id="GO:0005737">
    <property type="term" value="C:cytoplasm"/>
    <property type="evidence" value="ECO:0007669"/>
    <property type="project" value="UniProtKB-SubCell"/>
</dbReference>
<dbReference type="GO" id="GO:0005524">
    <property type="term" value="F:ATP binding"/>
    <property type="evidence" value="ECO:0007669"/>
    <property type="project" value="UniProtKB-UniRule"/>
</dbReference>
<dbReference type="GO" id="GO:0000287">
    <property type="term" value="F:magnesium ion binding"/>
    <property type="evidence" value="ECO:0007669"/>
    <property type="project" value="UniProtKB-UniRule"/>
</dbReference>
<dbReference type="GO" id="GO:0004642">
    <property type="term" value="F:phosphoribosylformylglycinamidine synthase activity"/>
    <property type="evidence" value="ECO:0007669"/>
    <property type="project" value="UniProtKB-UniRule"/>
</dbReference>
<dbReference type="GO" id="GO:0006189">
    <property type="term" value="P:'de novo' IMP biosynthetic process"/>
    <property type="evidence" value="ECO:0007669"/>
    <property type="project" value="UniProtKB-UniRule"/>
</dbReference>
<dbReference type="CDD" id="cd02203">
    <property type="entry name" value="PurL_repeat1"/>
    <property type="match status" value="1"/>
</dbReference>
<dbReference type="CDD" id="cd02204">
    <property type="entry name" value="PurL_repeat2"/>
    <property type="match status" value="1"/>
</dbReference>
<dbReference type="FunFam" id="3.30.1330.10:FF:000004">
    <property type="entry name" value="Phosphoribosylformylglycinamidine synthase subunit PurL"/>
    <property type="match status" value="1"/>
</dbReference>
<dbReference type="FunFam" id="3.90.650.10:FF:000009">
    <property type="entry name" value="Phosphoribosylformylglycinamidine synthase subunit PurL"/>
    <property type="match status" value="1"/>
</dbReference>
<dbReference type="Gene3D" id="3.90.650.10">
    <property type="entry name" value="PurM-like C-terminal domain"/>
    <property type="match status" value="2"/>
</dbReference>
<dbReference type="Gene3D" id="3.30.1330.10">
    <property type="entry name" value="PurM-like, N-terminal domain"/>
    <property type="match status" value="2"/>
</dbReference>
<dbReference type="HAMAP" id="MF_00420">
    <property type="entry name" value="PurL_2"/>
    <property type="match status" value="1"/>
</dbReference>
<dbReference type="InterPro" id="IPR010074">
    <property type="entry name" value="PRibForGlyAmidine_synth_PurL"/>
</dbReference>
<dbReference type="InterPro" id="IPR041609">
    <property type="entry name" value="PurL_linker"/>
</dbReference>
<dbReference type="InterPro" id="IPR010918">
    <property type="entry name" value="PurM-like_C_dom"/>
</dbReference>
<dbReference type="InterPro" id="IPR036676">
    <property type="entry name" value="PurM-like_C_sf"/>
</dbReference>
<dbReference type="InterPro" id="IPR016188">
    <property type="entry name" value="PurM-like_N"/>
</dbReference>
<dbReference type="InterPro" id="IPR036921">
    <property type="entry name" value="PurM-like_N_sf"/>
</dbReference>
<dbReference type="NCBIfam" id="TIGR01736">
    <property type="entry name" value="FGAM_synth_II"/>
    <property type="match status" value="1"/>
</dbReference>
<dbReference type="NCBIfam" id="NF002290">
    <property type="entry name" value="PRK01213.1"/>
    <property type="match status" value="1"/>
</dbReference>
<dbReference type="PANTHER" id="PTHR43555">
    <property type="entry name" value="PHOSPHORIBOSYLFORMYLGLYCINAMIDINE SYNTHASE SUBUNIT PURL"/>
    <property type="match status" value="1"/>
</dbReference>
<dbReference type="PANTHER" id="PTHR43555:SF1">
    <property type="entry name" value="PHOSPHORIBOSYLFORMYLGLYCINAMIDINE SYNTHASE SUBUNIT PURL"/>
    <property type="match status" value="1"/>
</dbReference>
<dbReference type="Pfam" id="PF00586">
    <property type="entry name" value="AIRS"/>
    <property type="match status" value="2"/>
</dbReference>
<dbReference type="Pfam" id="PF02769">
    <property type="entry name" value="AIRS_C"/>
    <property type="match status" value="2"/>
</dbReference>
<dbReference type="Pfam" id="PF18072">
    <property type="entry name" value="FGAR-AT_linker"/>
    <property type="match status" value="1"/>
</dbReference>
<dbReference type="PIRSF" id="PIRSF001587">
    <property type="entry name" value="FGAM_synthase_II"/>
    <property type="match status" value="1"/>
</dbReference>
<dbReference type="SUPFAM" id="SSF56042">
    <property type="entry name" value="PurM C-terminal domain-like"/>
    <property type="match status" value="2"/>
</dbReference>
<dbReference type="SUPFAM" id="SSF55326">
    <property type="entry name" value="PurM N-terminal domain-like"/>
    <property type="match status" value="2"/>
</dbReference>
<accession>B7GFT8</accession>
<organism>
    <name type="scientific">Anoxybacillus flavithermus (strain DSM 21510 / WK1)</name>
    <dbReference type="NCBI Taxonomy" id="491915"/>
    <lineage>
        <taxon>Bacteria</taxon>
        <taxon>Bacillati</taxon>
        <taxon>Bacillota</taxon>
        <taxon>Bacilli</taxon>
        <taxon>Bacillales</taxon>
        <taxon>Anoxybacillaceae</taxon>
        <taxon>Anoxybacillus</taxon>
    </lineage>
</organism>
<name>PURL_ANOFW</name>
<protein>
    <recommendedName>
        <fullName evidence="1">Phosphoribosylformylglycinamidine synthase subunit PurL</fullName>
        <shortName evidence="1">FGAM synthase</shortName>
        <ecNumber evidence="1">6.3.5.3</ecNumber>
    </recommendedName>
    <alternativeName>
        <fullName evidence="1">Formylglycinamide ribonucleotide amidotransferase subunit II</fullName>
        <shortName evidence="1">FGAR amidotransferase II</shortName>
        <shortName evidence="1">FGAR-AT II</shortName>
    </alternativeName>
    <alternativeName>
        <fullName evidence="1">Glutamine amidotransferase PurL</fullName>
    </alternativeName>
    <alternativeName>
        <fullName evidence="1">Phosphoribosylformylglycinamidine synthase subunit II</fullName>
    </alternativeName>
</protein>
<evidence type="ECO:0000255" key="1">
    <source>
        <dbReference type="HAMAP-Rule" id="MF_00420"/>
    </source>
</evidence>
<comment type="function">
    <text evidence="1">Part of the phosphoribosylformylglycinamidine synthase complex involved in the purines biosynthetic pathway. Catalyzes the ATP-dependent conversion of formylglycinamide ribonucleotide (FGAR) and glutamine to yield formylglycinamidine ribonucleotide (FGAM) and glutamate. The FGAM synthase complex is composed of three subunits. PurQ produces an ammonia molecule by converting glutamine to glutamate. PurL transfers the ammonia molecule to FGAR to form FGAM in an ATP-dependent manner. PurS interacts with PurQ and PurL and is thought to assist in the transfer of the ammonia molecule from PurQ to PurL.</text>
</comment>
<comment type="catalytic activity">
    <reaction evidence="1">
        <text>N(2)-formyl-N(1)-(5-phospho-beta-D-ribosyl)glycinamide + L-glutamine + ATP + H2O = 2-formamido-N(1)-(5-O-phospho-beta-D-ribosyl)acetamidine + L-glutamate + ADP + phosphate + H(+)</text>
        <dbReference type="Rhea" id="RHEA:17129"/>
        <dbReference type="ChEBI" id="CHEBI:15377"/>
        <dbReference type="ChEBI" id="CHEBI:15378"/>
        <dbReference type="ChEBI" id="CHEBI:29985"/>
        <dbReference type="ChEBI" id="CHEBI:30616"/>
        <dbReference type="ChEBI" id="CHEBI:43474"/>
        <dbReference type="ChEBI" id="CHEBI:58359"/>
        <dbReference type="ChEBI" id="CHEBI:147286"/>
        <dbReference type="ChEBI" id="CHEBI:147287"/>
        <dbReference type="ChEBI" id="CHEBI:456216"/>
        <dbReference type="EC" id="6.3.5.3"/>
    </reaction>
</comment>
<comment type="pathway">
    <text evidence="1">Purine metabolism; IMP biosynthesis via de novo pathway; 5-amino-1-(5-phospho-D-ribosyl)imidazole from N(2)-formyl-N(1)-(5-phospho-D-ribosyl)glycinamide: step 1/2.</text>
</comment>
<comment type="subunit">
    <text evidence="1">Monomer. Part of the FGAM synthase complex composed of 1 PurL, 1 PurQ and 2 PurS subunits.</text>
</comment>
<comment type="subcellular location">
    <subcellularLocation>
        <location evidence="1">Cytoplasm</location>
    </subcellularLocation>
</comment>
<comment type="similarity">
    <text evidence="1">Belongs to the FGAMS family.</text>
</comment>
<feature type="chain" id="PRO_1000194817" description="Phosphoribosylformylglycinamidine synthase subunit PurL">
    <location>
        <begin position="1"/>
        <end position="740"/>
    </location>
</feature>
<feature type="active site" evidence="1">
    <location>
        <position position="54"/>
    </location>
</feature>
<feature type="active site" description="Proton acceptor" evidence="1">
    <location>
        <position position="100"/>
    </location>
</feature>
<feature type="binding site" evidence="1">
    <location>
        <position position="57"/>
    </location>
    <ligand>
        <name>ATP</name>
        <dbReference type="ChEBI" id="CHEBI:30616"/>
    </ligand>
</feature>
<feature type="binding site" evidence="1">
    <location>
        <position position="96"/>
    </location>
    <ligand>
        <name>ATP</name>
        <dbReference type="ChEBI" id="CHEBI:30616"/>
    </ligand>
</feature>
<feature type="binding site" evidence="1">
    <location>
        <position position="98"/>
    </location>
    <ligand>
        <name>Mg(2+)</name>
        <dbReference type="ChEBI" id="CHEBI:18420"/>
        <label>1</label>
    </ligand>
</feature>
<feature type="binding site" evidence="1">
    <location>
        <begin position="99"/>
        <end position="102"/>
    </location>
    <ligand>
        <name>substrate</name>
    </ligand>
</feature>
<feature type="binding site" evidence="1">
    <location>
        <position position="121"/>
    </location>
    <ligand>
        <name>substrate</name>
    </ligand>
</feature>
<feature type="binding site" evidence="1">
    <location>
        <position position="122"/>
    </location>
    <ligand>
        <name>Mg(2+)</name>
        <dbReference type="ChEBI" id="CHEBI:18420"/>
        <label>2</label>
    </ligand>
</feature>
<feature type="binding site" evidence="1">
    <location>
        <position position="245"/>
    </location>
    <ligand>
        <name>substrate</name>
    </ligand>
</feature>
<feature type="binding site" evidence="1">
    <location>
        <position position="273"/>
    </location>
    <ligand>
        <name>Mg(2+)</name>
        <dbReference type="ChEBI" id="CHEBI:18420"/>
        <label>2</label>
    </ligand>
</feature>
<feature type="binding site" evidence="1">
    <location>
        <begin position="317"/>
        <end position="319"/>
    </location>
    <ligand>
        <name>substrate</name>
    </ligand>
</feature>
<feature type="binding site" evidence="1">
    <location>
        <position position="499"/>
    </location>
    <ligand>
        <name>ATP</name>
        <dbReference type="ChEBI" id="CHEBI:30616"/>
    </ligand>
</feature>
<feature type="binding site" evidence="1">
    <location>
        <position position="536"/>
    </location>
    <ligand>
        <name>ATP</name>
        <dbReference type="ChEBI" id="CHEBI:30616"/>
    </ligand>
</feature>
<feature type="binding site" evidence="1">
    <location>
        <position position="537"/>
    </location>
    <ligand>
        <name>Mg(2+)</name>
        <dbReference type="ChEBI" id="CHEBI:18420"/>
        <label>1</label>
    </ligand>
</feature>
<feature type="binding site" evidence="1">
    <location>
        <position position="539"/>
    </location>
    <ligand>
        <name>substrate</name>
    </ligand>
</feature>
<sequence>MSLLLEPSPTMIKEQKMYRDMGLTDEEFAMIERILGRLPNYTETGIFSVMWSEHCSYKNSKPVLKKFPTEGKHVLQGPGEGAGIVDIGDGLAVAFKIESHNHPSAIEPYQGAATGVGGIIRDVFSMGARPIALLNSLRFGELTSPRVKYLFERVVAGIAGYGNCVGIPTVGGEVQFDAAYEGNPLVNAMCVGVIRHEDIQKGIASGVGNTVMYVGAKTGRDGIHGATFASEELTEQSEQKRPAVQVGDPFMEKLLLEACLEVIHCDALVGMQDMGAAGLTSSSAEMASKAGSGIELNLDLVPQRETGMTPYEMMLSESQERMLLVVKKGREQEIMDVFSKYGLEAKAIGRVTDDHMLRLYHRGEVVAEIPVDALAKDAPVYHKPSQEPAYYREFQTMEYVPTVDNYEETLLALLSQPTIASKEWVYEQYDYMVRTNTVVAPGSDAAVLRIRGTNKALAMTTDCNSRYVYLDPEVGGKIAIAEAARNIVCSGAQPLAVTDCLNFGNPEKPEIFWQLEKAVDGMSEACRILETPVISGNVSLYNETNGEAIYPTPIVGMVGIVEHVDHITTQAFKQPGDLIYIIGEAKQEFGGSELQKWLTGRIFGKAPTIDLHVEVKRQQQLLTAIRAGVVASAHDVSEGGLAVALAECVMSAQGLGARVEMKGDVVAELFSETQSRFIVSVKKEHQQMFERLVQAVRIGEVTNDGTLHVTAEDTCILHVPVETMRNVWKGAIPCLLKSKD</sequence>
<proteinExistence type="inferred from homology"/>
<gene>
    <name evidence="1" type="primary">purL</name>
    <name type="ordered locus">Aflv_0234</name>
</gene>